<name>CAP4_MOROS</name>
<reference key="1">
    <citation type="journal article" date="2018" name="Genome Announc.">
        <title>Complete Genome Sequences of Three Moraxella osloensis Strains Isolated from Human Skin.</title>
        <authorList>
            <person name="Lim J.Y."/>
            <person name="Hwang I."/>
            <person name="Ganzorig M."/>
            <person name="Huang S.L."/>
            <person name="Cho G.S."/>
            <person name="Franz C.M.A.P."/>
            <person name="Lee K."/>
        </authorList>
    </citation>
    <scope>NUCLEOTIDE SEQUENCE [LARGE SCALE GENOMIC DNA]</scope>
    <source>
        <strain>TT16 / KCTC 52863</strain>
        <plasmid>p2</plasmid>
    </source>
</reference>
<reference key="2">
    <citation type="submission" date="2019-05" db="EMBL/GenBank/DDBJ databases">
        <title>Complete Sequence and Annotation of the Moraxella osloensis Strain MOXF1 Genome.</title>
        <authorList>
            <person name="Brown D.R."/>
            <person name="Michaels D.L."/>
            <person name="Kutish G.F."/>
            <person name="Frasca S. Jr."/>
        </authorList>
    </citation>
    <scope>NUCLEOTIDE SEQUENCE [LARGE SCALE GENOMIC DNA]</scope>
    <source>
        <strain>MOXF1</strain>
    </source>
</reference>
<reference key="3">
    <citation type="journal article" date="2020" name="Nat. Microbiol.">
        <title>Diversity and classification of cyclic-oligonucleotide-based anti-phage signalling systems.</title>
        <authorList>
            <person name="Millman A."/>
            <person name="Melamed S."/>
            <person name="Amitai G."/>
            <person name="Sorek R."/>
        </authorList>
    </citation>
    <scope>CLASSIFICATION AND NOMENCLATURE</scope>
</reference>
<reference evidence="8" key="4">
    <citation type="journal article" date="2020" name="Cell">
        <title>CBASS immunity uses CARF-related effectors to sense 3'-5' and 2'-5'-linked cyclic oligonucleotide signals and protect bacteria from phage infection.</title>
        <authorList>
            <person name="Lowey B."/>
            <person name="Whiteley A.T."/>
            <person name="Keszei A.F.A."/>
            <person name="Morehouse B.R."/>
            <person name="Antine S.P."/>
            <person name="Cabrera V.J."/>
            <person name="Kashin D."/>
            <person name="Schwede F."/>
            <person name="Mekalanos J.J."/>
            <person name="Shao S."/>
            <person name="Lee A.S.Y."/>
            <person name="Kranzusch P.J."/>
        </authorList>
    </citation>
    <scope>X-RAY CRYSTALLOGRAPHY (2.35 ANGSTROMS)</scope>
    <scope>FUNCTION AS A NUCLEASE</scope>
    <scope>ACTIVITY REGULATION</scope>
    <scope>SUBUNIT</scope>
    <scope>OPERON STRUCTURE</scope>
    <scope>DOMAIN</scope>
</reference>
<dbReference type="EC" id="3.1.-.-" evidence="1"/>
<dbReference type="EMBL" id="CP024187">
    <property type="protein sequence ID" value="ATW86742.1"/>
    <property type="molecule type" value="Genomic_DNA"/>
</dbReference>
<dbReference type="EMBL" id="CP040257">
    <property type="protein sequence ID" value="QCR86478.1"/>
    <property type="molecule type" value="Genomic_DNA"/>
</dbReference>
<dbReference type="RefSeq" id="WP_060996052.1">
    <property type="nucleotide sequence ID" value="NZ_CP024187.1"/>
</dbReference>
<dbReference type="PDB" id="6VM5">
    <property type="method" value="X-ray"/>
    <property type="resolution" value="2.35 A"/>
    <property type="chains" value="A=1-464"/>
</dbReference>
<dbReference type="PDBsum" id="6VM5"/>
<dbReference type="SMR" id="A0A2K8K5C5"/>
<dbReference type="GO" id="GO:0004519">
    <property type="term" value="F:endonuclease activity"/>
    <property type="evidence" value="ECO:0007669"/>
    <property type="project" value="UniProtKB-KW"/>
</dbReference>
<dbReference type="GO" id="GO:0000166">
    <property type="term" value="F:nucleotide binding"/>
    <property type="evidence" value="ECO:0007669"/>
    <property type="project" value="UniProtKB-KW"/>
</dbReference>
<dbReference type="GO" id="GO:0051607">
    <property type="term" value="P:defense response to virus"/>
    <property type="evidence" value="ECO:0007669"/>
    <property type="project" value="UniProtKB-KW"/>
</dbReference>
<dbReference type="InterPro" id="IPR025382">
    <property type="entry name" value="Cap4-like_endonuclease_dom"/>
</dbReference>
<dbReference type="InterPro" id="IPR040836">
    <property type="entry name" value="SAVED"/>
</dbReference>
<dbReference type="NCBIfam" id="NF033611">
    <property type="entry name" value="SAVED"/>
    <property type="match status" value="1"/>
</dbReference>
<dbReference type="Pfam" id="PF14130">
    <property type="entry name" value="Cap4_nuclease"/>
    <property type="match status" value="1"/>
</dbReference>
<dbReference type="Pfam" id="PF18145">
    <property type="entry name" value="SAVED"/>
    <property type="match status" value="1"/>
</dbReference>
<accession>A0A2K8K5C5</accession>
<evidence type="ECO:0000269" key="1">
    <source>
    </source>
</evidence>
<evidence type="ECO:0000303" key="2">
    <source>
    </source>
</evidence>
<evidence type="ECO:0000303" key="3">
    <source>
    </source>
</evidence>
<evidence type="ECO:0000305" key="4"/>
<evidence type="ECO:0000305" key="5">
    <source>
    </source>
</evidence>
<evidence type="ECO:0000312" key="6">
    <source>
        <dbReference type="EMBL" id="ATW86742.1"/>
    </source>
</evidence>
<evidence type="ECO:0000312" key="7">
    <source>
        <dbReference type="EMBL" id="QCR86478.1"/>
    </source>
</evidence>
<evidence type="ECO:0007744" key="8">
    <source>
        <dbReference type="PDB" id="6VM5"/>
    </source>
</evidence>
<evidence type="ECO:0007829" key="9">
    <source>
        <dbReference type="PDB" id="6VM5"/>
    </source>
</evidence>
<sequence>MSASLLEKQSTGGAIARVGFEYQDAFVLKNLPLWLSESAFSHIVSESIGDVEVCYFSLEKDFQRVMYEAKNHSLTSTDFWKEIKRFKEAFDIPSSEFTRFGLVCPLYTSTLHPFLAQIERIRGVGSSYSADSVILQKSRQDITQWCSDKGFETSLAEFALDHVDFLSFNAEDSDSVFIGEIEEKLSNIELTTRKAKQLRDQFKNLISRSSFGPIHRKDFENFICHALEEDRTQWLSDPIKINLSASSSQHQDLNLDISDFNGPDRAQKTSSDWNSLIKKAVSIGDFIHNSGDRRTLLIDGKQRMSTACMLGYVFSATRNFLLEIEHNGLAYRTDDHKQKEGQFFNKTNSIELHGKTEAIVTIGFPTAIGKDIDSTINEIKNLPRLNLESSNVIDNMETLNLAVKEAKSALVSFKAENKLSKLHLFIKAPSVFAMVLGHRLNGVCNIQLYDWVNGEYMPTAELNI</sequence>
<gene>
    <name evidence="2" type="primary">cap4</name>
    <name evidence="7" type="ORF">FEF33_11620</name>
    <name evidence="6" type="ORF">MOTT16_09860</name>
</gene>
<geneLocation type="plasmid">
    <name>p2</name>
</geneLocation>
<feature type="chain" id="PRO_0000451852" description="CD-NTase-associated protein 4">
    <location>
        <begin position="1"/>
        <end position="464"/>
    </location>
</feature>
<feature type="region of interest" description="N-terminal endonuclease domain" evidence="5">
    <location>
        <begin position="1"/>
        <end position="228"/>
    </location>
</feature>
<feature type="region of interest" description="C-terminal SAVED domain" evidence="5">
    <location>
        <begin position="229"/>
        <end position="464"/>
    </location>
</feature>
<feature type="helix" evidence="9">
    <location>
        <begin position="21"/>
        <end position="35"/>
    </location>
</feature>
<feature type="strand" evidence="9">
    <location>
        <begin position="40"/>
        <end position="47"/>
    </location>
</feature>
<feature type="strand" evidence="9">
    <location>
        <begin position="50"/>
        <end position="56"/>
    </location>
</feature>
<feature type="strand" evidence="9">
    <location>
        <begin position="58"/>
        <end position="69"/>
    </location>
</feature>
<feature type="helix" evidence="9">
    <location>
        <begin position="76"/>
        <end position="91"/>
    </location>
</feature>
<feature type="strand" evidence="9">
    <location>
        <begin position="97"/>
        <end position="105"/>
    </location>
</feature>
<feature type="helix" evidence="9">
    <location>
        <begin position="109"/>
        <end position="111"/>
    </location>
</feature>
<feature type="helix" evidence="9">
    <location>
        <begin position="112"/>
        <end position="121"/>
    </location>
</feature>
<feature type="helix" evidence="9">
    <location>
        <begin position="135"/>
        <end position="148"/>
    </location>
</feature>
<feature type="helix" evidence="9">
    <location>
        <begin position="153"/>
        <end position="162"/>
    </location>
</feature>
<feature type="strand" evidence="9">
    <location>
        <begin position="163"/>
        <end position="167"/>
    </location>
</feature>
<feature type="helix" evidence="9">
    <location>
        <begin position="173"/>
        <end position="184"/>
    </location>
</feature>
<feature type="helix" evidence="9">
    <location>
        <begin position="192"/>
        <end position="206"/>
    </location>
</feature>
<feature type="helix" evidence="9">
    <location>
        <begin position="207"/>
        <end position="211"/>
    </location>
</feature>
<feature type="helix" evidence="9">
    <location>
        <begin position="216"/>
        <end position="227"/>
    </location>
</feature>
<feature type="helix" evidence="9">
    <location>
        <begin position="228"/>
        <end position="231"/>
    </location>
</feature>
<feature type="helix" evidence="9">
    <location>
        <begin position="232"/>
        <end position="235"/>
    </location>
</feature>
<feature type="turn" evidence="9">
    <location>
        <begin position="258"/>
        <end position="260"/>
    </location>
</feature>
<feature type="helix" evidence="9">
    <location>
        <begin position="265"/>
        <end position="267"/>
    </location>
</feature>
<feature type="helix" evidence="9">
    <location>
        <begin position="270"/>
        <end position="289"/>
    </location>
</feature>
<feature type="strand" evidence="9">
    <location>
        <begin position="295"/>
        <end position="299"/>
    </location>
</feature>
<feature type="helix" evidence="9">
    <location>
        <begin position="304"/>
        <end position="313"/>
    </location>
</feature>
<feature type="turn" evidence="9">
    <location>
        <begin position="316"/>
        <end position="319"/>
    </location>
</feature>
<feature type="strand" evidence="9">
    <location>
        <begin position="321"/>
        <end position="326"/>
    </location>
</feature>
<feature type="strand" evidence="9">
    <location>
        <begin position="329"/>
        <end position="332"/>
    </location>
</feature>
<feature type="strand" evidence="9">
    <location>
        <begin position="356"/>
        <end position="366"/>
    </location>
</feature>
<feature type="strand" evidence="9">
    <location>
        <begin position="384"/>
        <end position="388"/>
    </location>
</feature>
<feature type="helix" evidence="9">
    <location>
        <begin position="396"/>
        <end position="412"/>
    </location>
</feature>
<feature type="strand" evidence="9">
    <location>
        <begin position="421"/>
        <end position="428"/>
    </location>
</feature>
<feature type="helix" evidence="9">
    <location>
        <begin position="430"/>
        <end position="439"/>
    </location>
</feature>
<feature type="strand" evidence="9">
    <location>
        <begin position="446"/>
        <end position="452"/>
    </location>
</feature>
<feature type="strand" evidence="9">
    <location>
        <begin position="455"/>
        <end position="462"/>
    </location>
</feature>
<keyword id="KW-0002">3D-structure</keyword>
<keyword id="KW-0051">Antiviral defense</keyword>
<keyword id="KW-0255">Endonuclease</keyword>
<keyword id="KW-0378">Hydrolase</keyword>
<keyword id="KW-0540">Nuclease</keyword>
<keyword id="KW-0547">Nucleotide-binding</keyword>
<keyword id="KW-0614">Plasmid</keyword>
<protein>
    <recommendedName>
        <fullName evidence="2">CD-NTase-associated protein 4</fullName>
        <shortName evidence="2">Cap4</shortName>
        <ecNumber evidence="1">3.1.-.-</ecNumber>
    </recommendedName>
    <alternativeName>
        <fullName evidence="4">Endodeoxyribonuclease Cap4</fullName>
    </alternativeName>
</protein>
<proteinExistence type="evidence at protein level"/>
<organism>
    <name type="scientific">Moraxella osloensis</name>
    <dbReference type="NCBI Taxonomy" id="34062"/>
    <lineage>
        <taxon>Bacteria</taxon>
        <taxon>Pseudomonadati</taxon>
        <taxon>Pseudomonadota</taxon>
        <taxon>Gammaproteobacteria</taxon>
        <taxon>Moraxellales</taxon>
        <taxon>Moraxellaceae</taxon>
        <taxon>Moraxella</taxon>
    </lineage>
</organism>
<comment type="function">
    <text evidence="1 3 5">Effector DNase of a CBASS antivirus system (PubMed:32544385). CBASS (cyclic oligonucleotide-based antiphage signaling system) provides immunity against bacteriophage. The CD-NTase protein synthesizes cyclic nucleotides in response to infection; these serve as specific second messenger signals. The signals activate a diverse range of effectors, leading to bacterial cell death and thus abortive phage infection (Probable). A type II-C CBASS system (PubMed:32839535).</text>
</comment>
<comment type="function">
    <text evidence="1">Probably in the presence of its endogenous cyclic nucleotide (synthesized by the cognate CD-NTase protein in the CBASS operon), or of 2',3',3'-cyclic AMP-AMP-AMP (cAAA) synthesized by Acinetobacter sp. ATCC 27244, endonucleolytically degrades dsDNA in a non-sequence specific manner. It is not activated by other cyclic nucleotides.</text>
</comment>
<comment type="activity regulation">
    <text evidence="1">DNase activity is activated upon ligand binding.</text>
</comment>
<comment type="subunit">
    <text evidence="1">A monomer in the absence of cAAA, in its presence it forms oligomers.</text>
</comment>
<comment type="induction">
    <text evidence="5">Part of the CBASS operon consisting of cdnD-cap2-cap3-cap4.</text>
</comment>
<comment type="domain">
    <text evidence="5">The cyclic nucleotide ligand binds in the C-terminal SAVED domain.</text>
</comment>
<comment type="similarity">
    <text evidence="5">Belongs to the Cap4 nuclease family.</text>
</comment>